<sequence length="214" mass="22635">MLIAIEGVDGAGKRTLVEKLSGAFRAAGRSVATLAFPRYGQSVAADIAAEALHGEHGDLASSVYAMATLFALDRAGAVHTIQGLCRGYDVVILDRYVASNAAYSAARLHENAAGKAAAWVQRIEFARLGLPKPDWQVLLAVSAELAGERSRGRAQRDPGRARDNYERDAELQQRTGAVYAELAAQGWGGRWLVVGADVDPGRLAATLAPPDVPS</sequence>
<organism>
    <name type="scientific">Mycobacterium tuberculosis (strain ATCC 25618 / H37Rv)</name>
    <dbReference type="NCBI Taxonomy" id="83332"/>
    <lineage>
        <taxon>Bacteria</taxon>
        <taxon>Bacillati</taxon>
        <taxon>Actinomycetota</taxon>
        <taxon>Actinomycetes</taxon>
        <taxon>Mycobacteriales</taxon>
        <taxon>Mycobacteriaceae</taxon>
        <taxon>Mycobacterium</taxon>
        <taxon>Mycobacterium tuberculosis complex</taxon>
    </lineage>
</organism>
<accession>P9WKE1</accession>
<accession>L0TDK8</accession>
<accession>O05891</accession>
<accession>Q7D5U8</accession>
<evidence type="ECO:0000255" key="1"/>
<evidence type="ECO:0000269" key="2">
    <source>
    </source>
</evidence>
<evidence type="ECO:0000269" key="3">
    <source>
    </source>
</evidence>
<evidence type="ECO:0000303" key="4">
    <source>
    </source>
</evidence>
<evidence type="ECO:0000305" key="5"/>
<evidence type="ECO:0007829" key="6">
    <source>
        <dbReference type="PDB" id="1GTV"/>
    </source>
</evidence>
<feature type="chain" id="PRO_0000155309" description="Thymidylate kinase">
    <location>
        <begin position="1"/>
        <end position="214"/>
    </location>
</feature>
<feature type="region of interest" description="LID">
    <location>
        <begin position="147"/>
        <end position="159"/>
    </location>
</feature>
<feature type="binding site">
    <location>
        <begin position="7"/>
        <end position="14"/>
    </location>
    <ligand>
        <name>ATP</name>
        <dbReference type="ChEBI" id="CHEBI:30616"/>
    </ligand>
</feature>
<feature type="binding site">
    <location>
        <position position="9"/>
    </location>
    <ligand>
        <name>dTMP</name>
        <dbReference type="ChEBI" id="CHEBI:63528"/>
    </ligand>
</feature>
<feature type="binding site">
    <location>
        <position position="9"/>
    </location>
    <ligand>
        <name>Mg(2+)</name>
        <dbReference type="ChEBI" id="CHEBI:18420"/>
    </ligand>
</feature>
<feature type="binding site">
    <location>
        <position position="39"/>
    </location>
    <ligand>
        <name>dTMP</name>
        <dbReference type="ChEBI" id="CHEBI:63528"/>
    </ligand>
</feature>
<feature type="binding site">
    <location>
        <position position="70"/>
    </location>
    <ligand>
        <name>dTMP</name>
        <dbReference type="ChEBI" id="CHEBI:63528"/>
    </ligand>
</feature>
<feature type="binding site">
    <location>
        <position position="74"/>
    </location>
    <ligand>
        <name>dTMP</name>
        <dbReference type="ChEBI" id="CHEBI:63528"/>
    </ligand>
</feature>
<feature type="binding site">
    <location>
        <position position="95"/>
    </location>
    <ligand>
        <name>dTMP</name>
        <dbReference type="ChEBI" id="CHEBI:63528"/>
    </ligand>
</feature>
<feature type="binding site">
    <location>
        <position position="100"/>
    </location>
    <ligand>
        <name>dTMP</name>
        <dbReference type="ChEBI" id="CHEBI:63528"/>
    </ligand>
</feature>
<feature type="binding site">
    <location>
        <position position="103"/>
    </location>
    <ligand>
        <name>dTMP</name>
        <dbReference type="ChEBI" id="CHEBI:63528"/>
    </ligand>
</feature>
<feature type="binding site">
    <location>
        <position position="163"/>
    </location>
    <ligand>
        <name>dTMP</name>
        <dbReference type="ChEBI" id="CHEBI:63528"/>
    </ligand>
</feature>
<feature type="binding site">
    <location>
        <position position="165"/>
    </location>
    <ligand>
        <name>dTMP</name>
        <dbReference type="ChEBI" id="CHEBI:63528"/>
    </ligand>
</feature>
<feature type="binding site">
    <location>
        <position position="166"/>
    </location>
    <ligand>
        <name>Mg(2+)</name>
        <dbReference type="ChEBI" id="CHEBI:18420"/>
    </ligand>
</feature>
<feature type="site" description="Transition state stabilizer" evidence="1">
    <location>
        <position position="153"/>
    </location>
</feature>
<feature type="strand" evidence="6">
    <location>
        <begin position="2"/>
        <end position="12"/>
    </location>
</feature>
<feature type="helix" evidence="6">
    <location>
        <begin position="13"/>
        <end position="25"/>
    </location>
</feature>
<feature type="strand" evidence="6">
    <location>
        <begin position="26"/>
        <end position="47"/>
    </location>
</feature>
<feature type="helix" evidence="6">
    <location>
        <begin position="48"/>
        <end position="51"/>
    </location>
</feature>
<feature type="strand" evidence="6">
    <location>
        <begin position="52"/>
        <end position="62"/>
    </location>
</feature>
<feature type="helix" evidence="6">
    <location>
        <begin position="63"/>
        <end position="74"/>
    </location>
</feature>
<feature type="strand" evidence="6">
    <location>
        <begin position="75"/>
        <end position="79"/>
    </location>
</feature>
<feature type="helix" evidence="6">
    <location>
        <begin position="80"/>
        <end position="83"/>
    </location>
</feature>
<feature type="strand" evidence="6">
    <location>
        <begin position="84"/>
        <end position="97"/>
    </location>
</feature>
<feature type="helix" evidence="6">
    <location>
        <begin position="98"/>
        <end position="107"/>
    </location>
</feature>
<feature type="strand" evidence="6">
    <location>
        <begin position="108"/>
        <end position="114"/>
    </location>
</feature>
<feature type="helix" evidence="6">
    <location>
        <begin position="115"/>
        <end position="123"/>
    </location>
</feature>
<feature type="strand" evidence="6">
    <location>
        <begin position="124"/>
        <end position="129"/>
    </location>
</feature>
<feature type="strand" evidence="6">
    <location>
        <begin position="134"/>
        <end position="142"/>
    </location>
</feature>
<feature type="helix" evidence="6">
    <location>
        <begin position="143"/>
        <end position="155"/>
    </location>
</feature>
<feature type="strand" evidence="6">
    <location>
        <begin position="158"/>
        <end position="168"/>
    </location>
</feature>
<feature type="helix" evidence="6">
    <location>
        <begin position="169"/>
        <end position="183"/>
    </location>
</feature>
<feature type="strand" evidence="6">
    <location>
        <begin position="184"/>
        <end position="198"/>
    </location>
</feature>
<feature type="helix" evidence="6">
    <location>
        <begin position="200"/>
        <end position="207"/>
    </location>
</feature>
<comment type="function">
    <text evidence="2">Catalyzes the reversible phosphorylation of deoxythymidine monophosphate (dTMP) to deoxythymidine diphosphate (dTDP), using ATP as its preferred phosphoryl donor. Situated at the junction of both de novo and salvage pathways of deoxythymidine triphosphate (dTTP) synthesis, is essential for DNA synthesis and cellular growth. Has a broad specificity for nucleoside triphosphates, being highly active with ATP or dATP as phosphate donors, and less active with ITP, GTP, CTP and UTP.</text>
</comment>
<comment type="catalytic activity">
    <reaction evidence="2">
        <text>dTMP + ATP = dTDP + ADP</text>
        <dbReference type="Rhea" id="RHEA:13517"/>
        <dbReference type="ChEBI" id="CHEBI:30616"/>
        <dbReference type="ChEBI" id="CHEBI:58369"/>
        <dbReference type="ChEBI" id="CHEBI:63528"/>
        <dbReference type="ChEBI" id="CHEBI:456216"/>
        <dbReference type="EC" id="2.7.4.9"/>
    </reaction>
</comment>
<comment type="cofactor">
    <cofactor>
        <name>Mg(2+)</name>
        <dbReference type="ChEBI" id="CHEBI:18420"/>
    </cofactor>
    <text>Binds 1 Mg(2+) ion per subunit. This ion is required for catalysis, binding to the active site transiently (at the TMP-binding site), and probably acting as a clamp between the phosphoryl donor and acceptor.</text>
</comment>
<comment type="activity regulation">
    <text evidence="2">Competitively inhibited at the phosphate acceptor site by 3'-azido-3'-deoxythymidine monophosphate (AZT-MP) (in contrast to other TMPKs such as E.coli, in which it is a good substrate). Inhibition seems to result from the impossibility of magnesium binding.</text>
</comment>
<comment type="biophysicochemical properties">
    <kinetics>
        <KM evidence="2">0.1 mM for ATP (at pH 7.4 and 30 degrees Celsius)</KM>
        <KM evidence="2">4.5 uM for dTMP (at pH 7.4 and 30 degrees Celsius)</KM>
        <KM evidence="2">0.14 mM for dehydro-TMP (at pH 7.4 and 30 degrees Celsius)</KM>
        <KM evidence="2">2.1 mM for dUMP (at pH 7.4 and 30 degrees Celsius)</KM>
        <Vmax evidence="2">13.0 umol/min/mg enzyme with ATP and dTMP as substrates (at pH 7.4 and 30 degrees Celsius)</Vmax>
        <Vmax evidence="2">0.16 umol/min/mg enzyme with ATP and dehydro-TMP as substrates (at pH 7.4 and 30 degrees Celsius)</Vmax>
        <Vmax evidence="2">3.5 umol/min/mg enzyme with ATP and dUMP as substrates (at pH 7.4 and 30 degrees Celsius)</Vmax>
    </kinetics>
    <phDependence>
        <text evidence="2 3">Optimum pH is 7.5-8.5. Inactive below pH 4.6.</text>
    </phDependence>
    <temperatureDependence>
        <text evidence="2">Highly thermostable. Is half-inactivated at 65 degrees Celsius.</text>
    </temperatureDependence>
</comment>
<comment type="pathway">
    <text>Pyrimidine metabolism; dTTP biosynthesis.</text>
</comment>
<comment type="subunit">
    <text evidence="2">Homodimer.</text>
</comment>
<comment type="domain">
    <text>The LID domain is a solvent-exposed domain that closes over the site of phosphoryl transfer upon ATP binding.</text>
</comment>
<comment type="mass spectrometry" mass="22635.89" error="2.23" method="Electrospray" evidence="2"/>
<comment type="miscellaneous">
    <text>Was identified as a high-confidence drug target.</text>
</comment>
<comment type="similarity">
    <text evidence="5">Belongs to the thymidylate kinase family.</text>
</comment>
<name>KTHY_MYCTU</name>
<keyword id="KW-0002">3D-structure</keyword>
<keyword id="KW-0067">ATP-binding</keyword>
<keyword id="KW-0903">Direct protein sequencing</keyword>
<keyword id="KW-0418">Kinase</keyword>
<keyword id="KW-0460">Magnesium</keyword>
<keyword id="KW-0479">Metal-binding</keyword>
<keyword id="KW-0545">Nucleotide biosynthesis</keyword>
<keyword id="KW-0547">Nucleotide-binding</keyword>
<keyword id="KW-1185">Reference proteome</keyword>
<keyword id="KW-0808">Transferase</keyword>
<reference key="1">
    <citation type="journal article" date="1998" name="Nature">
        <title>Deciphering the biology of Mycobacterium tuberculosis from the complete genome sequence.</title>
        <authorList>
            <person name="Cole S.T."/>
            <person name="Brosch R."/>
            <person name="Parkhill J."/>
            <person name="Garnier T."/>
            <person name="Churcher C.M."/>
            <person name="Harris D.E."/>
            <person name="Gordon S.V."/>
            <person name="Eiglmeier K."/>
            <person name="Gas S."/>
            <person name="Barry C.E. III"/>
            <person name="Tekaia F."/>
            <person name="Badcock K."/>
            <person name="Basham D."/>
            <person name="Brown D."/>
            <person name="Chillingworth T."/>
            <person name="Connor R."/>
            <person name="Davies R.M."/>
            <person name="Devlin K."/>
            <person name="Feltwell T."/>
            <person name="Gentles S."/>
            <person name="Hamlin N."/>
            <person name="Holroyd S."/>
            <person name="Hornsby T."/>
            <person name="Jagels K."/>
            <person name="Krogh A."/>
            <person name="McLean J."/>
            <person name="Moule S."/>
            <person name="Murphy L.D."/>
            <person name="Oliver S."/>
            <person name="Osborne J."/>
            <person name="Quail M.A."/>
            <person name="Rajandream M.A."/>
            <person name="Rogers J."/>
            <person name="Rutter S."/>
            <person name="Seeger K."/>
            <person name="Skelton S."/>
            <person name="Squares S."/>
            <person name="Squares R."/>
            <person name="Sulston J.E."/>
            <person name="Taylor K."/>
            <person name="Whitehead S."/>
            <person name="Barrell B.G."/>
        </authorList>
    </citation>
    <scope>NUCLEOTIDE SEQUENCE [LARGE SCALE GENOMIC DNA]</scope>
    <source>
        <strain>ATCC 25618 / H37Rv</strain>
    </source>
</reference>
<reference key="2">
    <citation type="journal article" date="2001" name="Protein Sci.">
        <title>Thymidylate kinase of Mycobacterium tuberculosis: a chimera sharing properties common to eukaryotic and bacterial enzymes.</title>
        <authorList>
            <person name="Munier-Lehmann H."/>
            <person name="Chaffotte A."/>
            <person name="Pochet S."/>
            <person name="Labesse G."/>
        </authorList>
    </citation>
    <scope>PROTEIN SEQUENCE OF N-TERMINUS</scope>
    <scope>PARTIAL PROTEIN SEQUENCE</scope>
    <scope>FUNCTION</scope>
    <scope>CATALYTIC ACTIVITY</scope>
    <scope>ACTIVITY REGULATION</scope>
    <scope>BIOPHYSICOCHEMICAL PROPERTIES</scope>
    <scope>SUBUNIT</scope>
    <scope>MASS SPECTROMETRY</scope>
    <source>
        <strain>ATCC 25618 / H37Rv</strain>
    </source>
</reference>
<reference key="3">
    <citation type="journal article" date="2000" name="Acta Crystallogr. D">
        <title>Crystallization and preliminary X-ray analysis of the thymidylate kinase from Mycobacterium tuberculosis.</title>
        <authorList>
            <person name="Li de la Sierra I."/>
            <person name="Munier-Lehmann H."/>
            <person name="Gilles A.-M."/>
            <person name="Barzu O."/>
            <person name="Delarue M."/>
        </authorList>
    </citation>
    <scope>CRYSTALLIZATION</scope>
</reference>
<reference key="4">
    <citation type="journal article" date="2008" name="BMC Syst. Biol.">
        <title>targetTB: a target identification pipeline for Mycobacterium tuberculosis through an interactome, reactome and genome-scale structural analysis.</title>
        <authorList>
            <person name="Raman K."/>
            <person name="Yeturu K."/>
            <person name="Chandra N."/>
        </authorList>
    </citation>
    <scope>IDENTIFICATION AS A DRUG TARGET [LARGE SCALE ANALYSIS]</scope>
</reference>
<reference key="5">
    <citation type="journal article" date="2011" name="Mol. Cell. Proteomics">
        <title>Proteogenomic analysis of Mycobacterium tuberculosis by high resolution mass spectrometry.</title>
        <authorList>
            <person name="Kelkar D.S."/>
            <person name="Kumar D."/>
            <person name="Kumar P."/>
            <person name="Balakrishnan L."/>
            <person name="Muthusamy B."/>
            <person name="Yadav A.K."/>
            <person name="Shrivastava P."/>
            <person name="Marimuthu A."/>
            <person name="Anand S."/>
            <person name="Sundaram H."/>
            <person name="Kingsbury R."/>
            <person name="Harsha H.C."/>
            <person name="Nair B."/>
            <person name="Prasad T.S."/>
            <person name="Chauhan D.S."/>
            <person name="Katoch K."/>
            <person name="Katoch V.M."/>
            <person name="Kumar P."/>
            <person name="Chaerkady R."/>
            <person name="Ramachandran S."/>
            <person name="Dash D."/>
            <person name="Pandey A."/>
        </authorList>
    </citation>
    <scope>IDENTIFICATION BY MASS SPECTROMETRY [LARGE SCALE ANALYSIS]</scope>
    <source>
        <strain>ATCC 25618 / H37Rv</strain>
    </source>
</reference>
<reference key="6">
    <citation type="journal article" date="2001" name="J. Mol. Biol.">
        <title>X-ray structure of TMP kinase from Mycobacterium tuberculosis complexed with TMP at 1.95 A resolution.</title>
        <authorList>
            <person name="Li de la Sierra I."/>
            <person name="Munier-Lehmann H."/>
            <person name="Gilles A.-M."/>
            <person name="Barzu O."/>
            <person name="Delarue M."/>
        </authorList>
    </citation>
    <scope>X-RAY CRYSTALLOGRAPHY (1.95 ANGSTROMS) OF COMPLEX WITH THYMIDINE MONOPHOSPHATE</scope>
</reference>
<reference key="7">
    <citation type="journal article" date="2002" name="Acta Crystallogr. D">
        <title>Cryophotolysis of caged compounds: a technique for trapping intermediate states in protein crystals.</title>
        <authorList>
            <person name="Ursby T."/>
            <person name="Weik M."/>
            <person name="Fioravanti E."/>
            <person name="Delarue M."/>
            <person name="Goeldner M."/>
            <person name="Bourgeois D."/>
        </authorList>
    </citation>
    <scope>X-RAY CRYSTALLOGRAPHY (1.55 ANGSTROMS) OF COMPLEXES WITH THYMIDINE MONOPHOSPHATE AND THYMIDINE-5'-DIPHOSPHATE</scope>
</reference>
<reference key="8">
    <citation type="journal article" date="2003" name="J. Biol. Chem.">
        <title>Enzymatic and structural analysis of inhibitors designed against Mycobacterium tuberculosis thymidylate kinase. New insights into the phosphoryl transfer mechanism.</title>
        <authorList>
            <person name="Haouz A."/>
            <person name="Vanheusden V."/>
            <person name="Munier-Lehmann H."/>
            <person name="Froeyen M."/>
            <person name="Herdewijn P."/>
            <person name="Van Calenbergh S."/>
            <person name="Delarue M."/>
        </authorList>
    </citation>
    <scope>X-RAY CRYSTALLOGRAPHY (2.0 ANGSTROMS) OF COMPLEXES WITH THE INHIBITORS AP5T AND 5-CH2OH DEOXYURIDINE MONOPHOSPHATE</scope>
</reference>
<reference key="9">
    <citation type="journal article" date="2003" name="J. Mol. Biol.">
        <title>Mycobacterium tuberculosis thymidylate kinase: structural studies of intermediates along the reaction pathway.</title>
        <authorList>
            <person name="Fioravanti E."/>
            <person name="Haouz A."/>
            <person name="Ursby T."/>
            <person name="Munier-Lehmann H."/>
            <person name="Delarue M."/>
            <person name="Bourgeois D."/>
        </authorList>
    </citation>
    <scope>X-RAY CRYSTALLOGRAPHY (1.85 ANGSTROMS) OF NATIVE PROTEIN AND COMPLEXES WITH THYMIDINE MONOPHOSPHATE</scope>
    <scope>THYMIDINE DIPHOSPHATE AND THYMIDINE TRIPHOSPHATE</scope>
    <scope>PH DEPENDENCE</scope>
    <scope>ROLE OF THE MAGNESIUM ION</scope>
</reference>
<reference key="10">
    <citation type="journal article" date="2005" name="Biochemistry">
        <title>The crystal structure of Mycobacterium tuberculosis thymidylate kinase in complex with 3'-azidodeoxythymidine monophosphate suggests a mechanism for competitive inhibition.</title>
        <authorList>
            <person name="Fioravanti E."/>
            <person name="Adam V."/>
            <person name="Munier-Lehmann H."/>
            <person name="Bourgeois D."/>
        </authorList>
    </citation>
    <scope>X-RAY CRYSTALLOGRAPHY (2.0 ANGSTROMS) OF COMPLEXES WITH DEOXYTHYMIDINE AND AZIDODEOXYTHYMIDINE MONOPHOSPHATE</scope>
</reference>
<protein>
    <recommendedName>
        <fullName evidence="4">Thymidylate kinase</fullName>
        <ecNumber evidence="2">2.7.4.9</ecNumber>
    </recommendedName>
    <alternativeName>
        <fullName>Thymidine monophosphate kinase</fullName>
    </alternativeName>
    <alternativeName>
        <fullName>dTMP kinase</fullName>
        <shortName>TMPK</shortName>
    </alternativeName>
</protein>
<gene>
    <name type="primary">tmk</name>
    <name type="ordered locus">Rv3247c</name>
</gene>
<proteinExistence type="evidence at protein level"/>
<dbReference type="EC" id="2.7.4.9" evidence="2"/>
<dbReference type="EMBL" id="AL123456">
    <property type="protein sequence ID" value="CCP46066.1"/>
    <property type="molecule type" value="Genomic_DNA"/>
</dbReference>
<dbReference type="PIR" id="A70593">
    <property type="entry name" value="A70593"/>
</dbReference>
<dbReference type="RefSeq" id="NP_217764.1">
    <property type="nucleotide sequence ID" value="NC_000962.3"/>
</dbReference>
<dbReference type="RefSeq" id="WP_003417036.1">
    <property type="nucleotide sequence ID" value="NC_000962.3"/>
</dbReference>
<dbReference type="PDB" id="1G3U">
    <property type="method" value="X-ray"/>
    <property type="resolution" value="1.95 A"/>
    <property type="chains" value="A=1-214"/>
</dbReference>
<dbReference type="PDB" id="1GSI">
    <property type="method" value="X-ray"/>
    <property type="resolution" value="1.60 A"/>
    <property type="chains" value="A=1-214"/>
</dbReference>
<dbReference type="PDB" id="1GTV">
    <property type="method" value="X-ray"/>
    <property type="resolution" value="1.55 A"/>
    <property type="chains" value="A/B=1-214"/>
</dbReference>
<dbReference type="PDB" id="1MRN">
    <property type="method" value="X-ray"/>
    <property type="resolution" value="2.45 A"/>
    <property type="chains" value="A=1-214"/>
</dbReference>
<dbReference type="PDB" id="1MRS">
    <property type="method" value="X-ray"/>
    <property type="resolution" value="2.00 A"/>
    <property type="chains" value="A=1-214"/>
</dbReference>
<dbReference type="PDB" id="1N5I">
    <property type="method" value="X-ray"/>
    <property type="resolution" value="1.85 A"/>
    <property type="chains" value="A=1-214"/>
</dbReference>
<dbReference type="PDB" id="1N5J">
    <property type="method" value="X-ray"/>
    <property type="resolution" value="1.85 A"/>
    <property type="chains" value="A=1-214"/>
</dbReference>
<dbReference type="PDB" id="1N5K">
    <property type="method" value="X-ray"/>
    <property type="resolution" value="2.10 A"/>
    <property type="chains" value="A/B=1-214"/>
</dbReference>
<dbReference type="PDB" id="1N5L">
    <property type="method" value="X-ray"/>
    <property type="resolution" value="2.30 A"/>
    <property type="chains" value="A/B=1-214"/>
</dbReference>
<dbReference type="PDB" id="1W2G">
    <property type="method" value="X-ray"/>
    <property type="resolution" value="2.10 A"/>
    <property type="chains" value="A/B=1-214"/>
</dbReference>
<dbReference type="PDB" id="1W2H">
    <property type="method" value="X-ray"/>
    <property type="resolution" value="2.00 A"/>
    <property type="chains" value="A/B=1-214"/>
</dbReference>
<dbReference type="PDB" id="4UNN">
    <property type="method" value="X-ray"/>
    <property type="resolution" value="2.50 A"/>
    <property type="chains" value="A/B=2-214"/>
</dbReference>
<dbReference type="PDB" id="4UNP">
    <property type="method" value="X-ray"/>
    <property type="resolution" value="2.30 A"/>
    <property type="chains" value="A=1-210"/>
</dbReference>
<dbReference type="PDB" id="4UNQ">
    <property type="method" value="X-ray"/>
    <property type="resolution" value="2.30 A"/>
    <property type="chains" value="A/B=1-210"/>
</dbReference>
<dbReference type="PDB" id="4UNR">
    <property type="method" value="X-ray"/>
    <property type="resolution" value="1.98 A"/>
    <property type="chains" value="A/B=1-210"/>
</dbReference>
<dbReference type="PDB" id="4UNS">
    <property type="method" value="X-ray"/>
    <property type="resolution" value="2.18 A"/>
    <property type="chains" value="A/B=1-210"/>
</dbReference>
<dbReference type="PDB" id="5NQ5">
    <property type="method" value="X-ray"/>
    <property type="resolution" value="2.85 A"/>
    <property type="chains" value="A=1-214"/>
</dbReference>
<dbReference type="PDB" id="5NR7">
    <property type="method" value="X-ray"/>
    <property type="resolution" value="2.35 A"/>
    <property type="chains" value="A/B=1-214"/>
</dbReference>
<dbReference type="PDB" id="5NRN">
    <property type="method" value="X-ray"/>
    <property type="resolution" value="2.20 A"/>
    <property type="chains" value="A/B=1-214"/>
</dbReference>
<dbReference type="PDB" id="5NRQ">
    <property type="method" value="X-ray"/>
    <property type="resolution" value="2.10 A"/>
    <property type="chains" value="A/B=1-214"/>
</dbReference>
<dbReference type="PDB" id="6YT1">
    <property type="method" value="X-ray"/>
    <property type="resolution" value="1.90 A"/>
    <property type="chains" value="A/B=1-214"/>
</dbReference>
<dbReference type="PDBsum" id="1G3U"/>
<dbReference type="PDBsum" id="1GSI"/>
<dbReference type="PDBsum" id="1GTV"/>
<dbReference type="PDBsum" id="1MRN"/>
<dbReference type="PDBsum" id="1MRS"/>
<dbReference type="PDBsum" id="1N5I"/>
<dbReference type="PDBsum" id="1N5J"/>
<dbReference type="PDBsum" id="1N5K"/>
<dbReference type="PDBsum" id="1N5L"/>
<dbReference type="PDBsum" id="1W2G"/>
<dbReference type="PDBsum" id="1W2H"/>
<dbReference type="PDBsum" id="4UNN"/>
<dbReference type="PDBsum" id="4UNP"/>
<dbReference type="PDBsum" id="4UNQ"/>
<dbReference type="PDBsum" id="4UNR"/>
<dbReference type="PDBsum" id="4UNS"/>
<dbReference type="PDBsum" id="5NQ5"/>
<dbReference type="PDBsum" id="5NR7"/>
<dbReference type="PDBsum" id="5NRN"/>
<dbReference type="PDBsum" id="5NRQ"/>
<dbReference type="PDBsum" id="6YT1"/>
<dbReference type="SMR" id="P9WKE1"/>
<dbReference type="FunCoup" id="P9WKE1">
    <property type="interactions" value="185"/>
</dbReference>
<dbReference type="STRING" id="83332.Rv3247c"/>
<dbReference type="BindingDB" id="P9WKE1"/>
<dbReference type="ChEMBL" id="CHEMBL2361"/>
<dbReference type="DrugBank" id="DB03846">
    <property type="generic name" value="2'-deoxy-5-(hydroxymethyl)uridine 5'-(dihydrogen phosphate)"/>
</dbReference>
<dbReference type="DrugBank" id="DB03280">
    <property type="generic name" value="p1-(5'-adenosyl)p5-(5'-thymidyl)pentaphosphate"/>
</dbReference>
<dbReference type="DrugBank" id="DB04485">
    <property type="generic name" value="Thymidine"/>
</dbReference>
<dbReference type="DrugBank" id="DB02452">
    <property type="generic name" value="Thymidine 5'-triphosphate"/>
</dbReference>
<dbReference type="DrugBank" id="DB01643">
    <property type="generic name" value="Thymidine monophosphate"/>
</dbReference>
<dbReference type="DrugBank" id="DB03666">
    <property type="generic name" value="Zidovudine monophosphate"/>
</dbReference>
<dbReference type="DrugCentral" id="P9WKE1"/>
<dbReference type="PaxDb" id="83332-Rv3247c"/>
<dbReference type="DNASU" id="888740"/>
<dbReference type="GeneID" id="888740"/>
<dbReference type="KEGG" id="mtu:Rv3247c"/>
<dbReference type="KEGG" id="mtv:RVBD_3247c"/>
<dbReference type="TubercuList" id="Rv3247c"/>
<dbReference type="eggNOG" id="COG0125">
    <property type="taxonomic scope" value="Bacteria"/>
</dbReference>
<dbReference type="InParanoid" id="P9WKE1"/>
<dbReference type="OrthoDB" id="9774907at2"/>
<dbReference type="PhylomeDB" id="P9WKE1"/>
<dbReference type="BioCyc" id="MetaCyc:G185E-7521-MONOMER"/>
<dbReference type="BRENDA" id="2.7.4.9">
    <property type="organism ID" value="3445"/>
</dbReference>
<dbReference type="SABIO-RK" id="P9WKE1"/>
<dbReference type="UniPathway" id="UPA00575"/>
<dbReference type="EvolutionaryTrace" id="P9WKE1"/>
<dbReference type="PRO" id="PR:P9WKE1"/>
<dbReference type="Proteomes" id="UP000001584">
    <property type="component" value="Chromosome"/>
</dbReference>
<dbReference type="GO" id="GO:0005737">
    <property type="term" value="C:cytoplasm"/>
    <property type="evidence" value="ECO:0000318"/>
    <property type="project" value="GO_Central"/>
</dbReference>
<dbReference type="GO" id="GO:0005829">
    <property type="term" value="C:cytosol"/>
    <property type="evidence" value="ECO:0000318"/>
    <property type="project" value="GO_Central"/>
</dbReference>
<dbReference type="GO" id="GO:0005524">
    <property type="term" value="F:ATP binding"/>
    <property type="evidence" value="ECO:0000314"/>
    <property type="project" value="MTBBASE"/>
</dbReference>
<dbReference type="GO" id="GO:0004798">
    <property type="term" value="F:dTMP kinase activity"/>
    <property type="evidence" value="ECO:0000314"/>
    <property type="project" value="MTBBASE"/>
</dbReference>
<dbReference type="GO" id="GO:0005525">
    <property type="term" value="F:GTP binding"/>
    <property type="evidence" value="ECO:0000314"/>
    <property type="project" value="MTBBASE"/>
</dbReference>
<dbReference type="GO" id="GO:0000287">
    <property type="term" value="F:magnesium ion binding"/>
    <property type="evidence" value="ECO:0000314"/>
    <property type="project" value="MTBBASE"/>
</dbReference>
<dbReference type="GO" id="GO:0042803">
    <property type="term" value="F:protein homodimerization activity"/>
    <property type="evidence" value="ECO:0000353"/>
    <property type="project" value="MTBBASE"/>
</dbReference>
<dbReference type="GO" id="GO:0006233">
    <property type="term" value="P:dTDP biosynthetic process"/>
    <property type="evidence" value="ECO:0000318"/>
    <property type="project" value="GO_Central"/>
</dbReference>
<dbReference type="GO" id="GO:0006235">
    <property type="term" value="P:dTTP biosynthetic process"/>
    <property type="evidence" value="ECO:0000318"/>
    <property type="project" value="GO_Central"/>
</dbReference>
<dbReference type="GO" id="GO:0006227">
    <property type="term" value="P:dUDP biosynthetic process"/>
    <property type="evidence" value="ECO:0000318"/>
    <property type="project" value="GO_Central"/>
</dbReference>
<dbReference type="GO" id="GO:0046044">
    <property type="term" value="P:TMP metabolic process"/>
    <property type="evidence" value="ECO:0000314"/>
    <property type="project" value="MTBBASE"/>
</dbReference>
<dbReference type="CDD" id="cd01672">
    <property type="entry name" value="TMPK"/>
    <property type="match status" value="1"/>
</dbReference>
<dbReference type="Gene3D" id="3.40.50.300">
    <property type="entry name" value="P-loop containing nucleotide triphosphate hydrolases"/>
    <property type="match status" value="1"/>
</dbReference>
<dbReference type="HAMAP" id="MF_00165">
    <property type="entry name" value="Thymidylate_kinase"/>
    <property type="match status" value="1"/>
</dbReference>
<dbReference type="InterPro" id="IPR027417">
    <property type="entry name" value="P-loop_NTPase"/>
</dbReference>
<dbReference type="InterPro" id="IPR039430">
    <property type="entry name" value="Thymidylate_kin-like_dom"/>
</dbReference>
<dbReference type="InterPro" id="IPR018095">
    <property type="entry name" value="Thymidylate_kin_CS"/>
</dbReference>
<dbReference type="InterPro" id="IPR018094">
    <property type="entry name" value="Thymidylate_kinase"/>
</dbReference>
<dbReference type="NCBIfam" id="NF005923">
    <property type="entry name" value="PRK07933.1"/>
    <property type="match status" value="1"/>
</dbReference>
<dbReference type="PANTHER" id="PTHR10344">
    <property type="entry name" value="THYMIDYLATE KINASE"/>
    <property type="match status" value="1"/>
</dbReference>
<dbReference type="PANTHER" id="PTHR10344:SF4">
    <property type="entry name" value="UMP-CMP KINASE 2, MITOCHONDRIAL"/>
    <property type="match status" value="1"/>
</dbReference>
<dbReference type="Pfam" id="PF02223">
    <property type="entry name" value="Thymidylate_kin"/>
    <property type="match status" value="1"/>
</dbReference>
<dbReference type="SUPFAM" id="SSF52540">
    <property type="entry name" value="P-loop containing nucleoside triphosphate hydrolases"/>
    <property type="match status" value="1"/>
</dbReference>
<dbReference type="PROSITE" id="PS01331">
    <property type="entry name" value="THYMIDYLATE_KINASE"/>
    <property type="match status" value="1"/>
</dbReference>